<dbReference type="EMBL" id="CP000020">
    <property type="protein sequence ID" value="AAW84770.1"/>
    <property type="molecule type" value="Genomic_DNA"/>
</dbReference>
<dbReference type="RefSeq" id="WP_011261093.1">
    <property type="nucleotide sequence ID" value="NC_006840.2"/>
</dbReference>
<dbReference type="RefSeq" id="YP_203658.1">
    <property type="nucleotide sequence ID" value="NC_006840.2"/>
</dbReference>
<dbReference type="SMR" id="Q5E876"/>
<dbReference type="STRING" id="312309.VF_0275"/>
<dbReference type="EnsemblBacteria" id="AAW84770">
    <property type="protein sequence ID" value="AAW84770"/>
    <property type="gene ID" value="VF_0275"/>
</dbReference>
<dbReference type="GeneID" id="54162896"/>
<dbReference type="KEGG" id="vfi:VF_0275"/>
<dbReference type="PATRIC" id="fig|312309.11.peg.270"/>
<dbReference type="eggNOG" id="COG1438">
    <property type="taxonomic scope" value="Bacteria"/>
</dbReference>
<dbReference type="HOGENOM" id="CLU_097103_2_0_6"/>
<dbReference type="OrthoDB" id="7060358at2"/>
<dbReference type="UniPathway" id="UPA00068"/>
<dbReference type="Proteomes" id="UP000000537">
    <property type="component" value="Chromosome I"/>
</dbReference>
<dbReference type="GO" id="GO:0005737">
    <property type="term" value="C:cytoplasm"/>
    <property type="evidence" value="ECO:0007669"/>
    <property type="project" value="UniProtKB-SubCell"/>
</dbReference>
<dbReference type="GO" id="GO:0034618">
    <property type="term" value="F:arginine binding"/>
    <property type="evidence" value="ECO:0007669"/>
    <property type="project" value="InterPro"/>
</dbReference>
<dbReference type="GO" id="GO:0003677">
    <property type="term" value="F:DNA binding"/>
    <property type="evidence" value="ECO:0007669"/>
    <property type="project" value="UniProtKB-KW"/>
</dbReference>
<dbReference type="GO" id="GO:0003700">
    <property type="term" value="F:DNA-binding transcription factor activity"/>
    <property type="evidence" value="ECO:0007669"/>
    <property type="project" value="UniProtKB-UniRule"/>
</dbReference>
<dbReference type="GO" id="GO:0006526">
    <property type="term" value="P:L-arginine biosynthetic process"/>
    <property type="evidence" value="ECO:0007669"/>
    <property type="project" value="UniProtKB-UniPathway"/>
</dbReference>
<dbReference type="GO" id="GO:0051259">
    <property type="term" value="P:protein complex oligomerization"/>
    <property type="evidence" value="ECO:0007669"/>
    <property type="project" value="InterPro"/>
</dbReference>
<dbReference type="GO" id="GO:1900079">
    <property type="term" value="P:regulation of arginine biosynthetic process"/>
    <property type="evidence" value="ECO:0007669"/>
    <property type="project" value="UniProtKB-UniRule"/>
</dbReference>
<dbReference type="Gene3D" id="3.30.1360.40">
    <property type="match status" value="1"/>
</dbReference>
<dbReference type="Gene3D" id="1.10.10.10">
    <property type="entry name" value="Winged helix-like DNA-binding domain superfamily/Winged helix DNA-binding domain"/>
    <property type="match status" value="1"/>
</dbReference>
<dbReference type="HAMAP" id="MF_00173">
    <property type="entry name" value="Arg_repressor"/>
    <property type="match status" value="1"/>
</dbReference>
<dbReference type="InterPro" id="IPR001669">
    <property type="entry name" value="Arg_repress"/>
</dbReference>
<dbReference type="InterPro" id="IPR020899">
    <property type="entry name" value="Arg_repress_C"/>
</dbReference>
<dbReference type="InterPro" id="IPR036251">
    <property type="entry name" value="Arg_repress_C_sf"/>
</dbReference>
<dbReference type="InterPro" id="IPR020900">
    <property type="entry name" value="Arg_repress_DNA-bd"/>
</dbReference>
<dbReference type="InterPro" id="IPR036388">
    <property type="entry name" value="WH-like_DNA-bd_sf"/>
</dbReference>
<dbReference type="InterPro" id="IPR036390">
    <property type="entry name" value="WH_DNA-bd_sf"/>
</dbReference>
<dbReference type="NCBIfam" id="TIGR01529">
    <property type="entry name" value="argR_whole"/>
    <property type="match status" value="1"/>
</dbReference>
<dbReference type="NCBIfam" id="NF003457">
    <property type="entry name" value="PRK05066.1"/>
    <property type="match status" value="1"/>
</dbReference>
<dbReference type="PANTHER" id="PTHR34471">
    <property type="entry name" value="ARGININE REPRESSOR"/>
    <property type="match status" value="1"/>
</dbReference>
<dbReference type="PANTHER" id="PTHR34471:SF1">
    <property type="entry name" value="ARGININE REPRESSOR"/>
    <property type="match status" value="1"/>
</dbReference>
<dbReference type="Pfam" id="PF01316">
    <property type="entry name" value="Arg_repressor"/>
    <property type="match status" value="1"/>
</dbReference>
<dbReference type="Pfam" id="PF02863">
    <property type="entry name" value="Arg_repressor_C"/>
    <property type="match status" value="1"/>
</dbReference>
<dbReference type="PRINTS" id="PR01467">
    <property type="entry name" value="ARGREPRESSOR"/>
</dbReference>
<dbReference type="SUPFAM" id="SSF55252">
    <property type="entry name" value="C-terminal domain of arginine repressor"/>
    <property type="match status" value="1"/>
</dbReference>
<dbReference type="SUPFAM" id="SSF46785">
    <property type="entry name" value="Winged helix' DNA-binding domain"/>
    <property type="match status" value="1"/>
</dbReference>
<proteinExistence type="inferred from homology"/>
<evidence type="ECO:0000255" key="1">
    <source>
        <dbReference type="HAMAP-Rule" id="MF_00173"/>
    </source>
</evidence>
<keyword id="KW-0028">Amino-acid biosynthesis</keyword>
<keyword id="KW-0055">Arginine biosynthesis</keyword>
<keyword id="KW-0963">Cytoplasm</keyword>
<keyword id="KW-0238">DNA-binding</keyword>
<keyword id="KW-1185">Reference proteome</keyword>
<keyword id="KW-0678">Repressor</keyword>
<keyword id="KW-0804">Transcription</keyword>
<keyword id="KW-0805">Transcription regulation</keyword>
<sequence length="156" mass="17196">MRNNEKQELLVKEFKAILKAERFGSQGEIVDALRQSGFDNINQSKVSRMLTKFGAVRTRNAKMEMVYCLPVELGVPTVSSSLRELVMDIDYNNALVVIHTGPGAAQLIARLLDSLGKAEGILGVVAGDDTIFITPTRNIEVAELFDSVCDLFEYSV</sequence>
<organism>
    <name type="scientific">Aliivibrio fischeri (strain ATCC 700601 / ES114)</name>
    <name type="common">Vibrio fischeri</name>
    <dbReference type="NCBI Taxonomy" id="312309"/>
    <lineage>
        <taxon>Bacteria</taxon>
        <taxon>Pseudomonadati</taxon>
        <taxon>Pseudomonadota</taxon>
        <taxon>Gammaproteobacteria</taxon>
        <taxon>Vibrionales</taxon>
        <taxon>Vibrionaceae</taxon>
        <taxon>Aliivibrio</taxon>
    </lineage>
</organism>
<comment type="function">
    <text evidence="1">Regulates arginine biosynthesis genes.</text>
</comment>
<comment type="pathway">
    <text>Amino-acid biosynthesis; L-arginine biosynthesis [regulation].</text>
</comment>
<comment type="subcellular location">
    <subcellularLocation>
        <location evidence="1">Cytoplasm</location>
    </subcellularLocation>
</comment>
<comment type="similarity">
    <text evidence="1">Belongs to the ArgR family.</text>
</comment>
<gene>
    <name evidence="1" type="primary">argR</name>
    <name type="ordered locus">VF_0275</name>
</gene>
<reference key="1">
    <citation type="journal article" date="2005" name="Proc. Natl. Acad. Sci. U.S.A.">
        <title>Complete genome sequence of Vibrio fischeri: a symbiotic bacterium with pathogenic congeners.</title>
        <authorList>
            <person name="Ruby E.G."/>
            <person name="Urbanowski M."/>
            <person name="Campbell J."/>
            <person name="Dunn A."/>
            <person name="Faini M."/>
            <person name="Gunsalus R."/>
            <person name="Lostroh P."/>
            <person name="Lupp C."/>
            <person name="McCann J."/>
            <person name="Millikan D."/>
            <person name="Schaefer A."/>
            <person name="Stabb E."/>
            <person name="Stevens A."/>
            <person name="Visick K."/>
            <person name="Whistler C."/>
            <person name="Greenberg E.P."/>
        </authorList>
    </citation>
    <scope>NUCLEOTIDE SEQUENCE [LARGE SCALE GENOMIC DNA]</scope>
    <source>
        <strain>ATCC 700601 / ES114</strain>
    </source>
</reference>
<protein>
    <recommendedName>
        <fullName evidence="1">Arginine repressor</fullName>
    </recommendedName>
</protein>
<feature type="chain" id="PRO_1000023612" description="Arginine repressor">
    <location>
        <begin position="1"/>
        <end position="156"/>
    </location>
</feature>
<name>ARGR_ALIF1</name>
<accession>Q5E876</accession>